<feature type="signal peptide" evidence="1">
    <location>
        <begin position="1"/>
        <end position="18"/>
    </location>
</feature>
<feature type="chain" id="PRO_0000377935" description="Uncharacterized protein 051L">
    <location>
        <begin position="19"/>
        <end position="282"/>
    </location>
</feature>
<keyword id="KW-1185">Reference proteome</keyword>
<keyword id="KW-0732">Signal</keyword>
<name>VF213_IIV3</name>
<gene>
    <name type="ORF">IIV3-051L</name>
</gene>
<protein>
    <recommendedName>
        <fullName>Uncharacterized protein 051L</fullName>
    </recommendedName>
</protein>
<dbReference type="EMBL" id="DQ643392">
    <property type="protein sequence ID" value="ABF82081.1"/>
    <property type="molecule type" value="Genomic_DNA"/>
</dbReference>
<dbReference type="RefSeq" id="YP_654623.1">
    <property type="nucleotide sequence ID" value="NC_008187.1"/>
</dbReference>
<dbReference type="KEGG" id="vg:4156301"/>
<dbReference type="OrthoDB" id="21900at10239"/>
<dbReference type="Proteomes" id="UP000001358">
    <property type="component" value="Genome"/>
</dbReference>
<comment type="similarity">
    <text evidence="2">Belongs to the IIV-6 213R family.</text>
</comment>
<sequence>MIDLLVILVSLLFGVVWYEKQLQTRIKIKEHFTILQPPPVIAAECPGSTTPWCVSNLDLANTSCQWFKKETTIKNLLGPANPKTLIPPVMVPRITDQSEWATDNYKLHSAINQTHSRALDYLADGQTTASCSSSPPLVYSSFNSNCCDGVKQGETHPLTVYDPRSVGGCTNPSRCFIDPVVGQPRYYYDDVNVTRAPNYITRNKLDTFSFGQTTGRLSNPNCLSDRPSINQLAVDHFHDNILQYRSSLMDSFRCKTQARSDQLRQFPISTNGQLAASGGSKV</sequence>
<organismHost>
    <name type="scientific">Aedes vexans</name>
    <name type="common">Inland floodwater mosquito</name>
    <name type="synonym">Culex vexans</name>
    <dbReference type="NCBI Taxonomy" id="7163"/>
</organismHost>
<organismHost>
    <name type="scientific">Culex territans</name>
    <dbReference type="NCBI Taxonomy" id="42431"/>
</organismHost>
<organismHost>
    <name type="scientific">Culiseta annulata</name>
    <dbReference type="NCBI Taxonomy" id="332058"/>
</organismHost>
<organismHost>
    <name type="scientific">Ochlerotatus sollicitans</name>
    <name type="common">eastern saltmarsh mosquito</name>
    <dbReference type="NCBI Taxonomy" id="310513"/>
</organismHost>
<organismHost>
    <name type="scientific">Ochlerotatus taeniorhynchus</name>
    <name type="common">Black salt marsh mosquito</name>
    <name type="synonym">Aedes taeniorhynchus</name>
    <dbReference type="NCBI Taxonomy" id="329105"/>
</organismHost>
<organismHost>
    <name type="scientific">Psorophora ferox</name>
    <dbReference type="NCBI Taxonomy" id="7183"/>
</organismHost>
<reference key="1">
    <citation type="journal article" date="2006" name="J. Virol.">
        <title>Genome of invertebrate iridescent virus type 3 (mosquito iridescent virus).</title>
        <authorList>
            <person name="Delhon G."/>
            <person name="Tulman E.R."/>
            <person name="Afonso C.L."/>
            <person name="Lu Z."/>
            <person name="Becnel J.J."/>
            <person name="Moser B.A."/>
            <person name="Kutish G.F."/>
            <person name="Rock D.L."/>
        </authorList>
    </citation>
    <scope>NUCLEOTIDE SEQUENCE [LARGE SCALE GENOMIC DNA]</scope>
</reference>
<evidence type="ECO:0000255" key="1"/>
<evidence type="ECO:0000305" key="2"/>
<proteinExistence type="inferred from homology"/>
<accession>Q197A9</accession>
<organism>
    <name type="scientific">Invertebrate iridescent virus 3</name>
    <name type="common">IIV-3</name>
    <name type="synonym">Mosquito iridescent virus</name>
    <dbReference type="NCBI Taxonomy" id="345201"/>
    <lineage>
        <taxon>Viruses</taxon>
        <taxon>Varidnaviria</taxon>
        <taxon>Bamfordvirae</taxon>
        <taxon>Nucleocytoviricota</taxon>
        <taxon>Megaviricetes</taxon>
        <taxon>Pimascovirales</taxon>
        <taxon>Iridoviridae</taxon>
        <taxon>Betairidovirinae</taxon>
        <taxon>Chloriridovirus</taxon>
    </lineage>
</organism>